<name>NAC81_ARATH</name>
<proteinExistence type="evidence at protein level"/>
<keyword id="KW-0010">Activator</keyword>
<keyword id="KW-0025">Alternative splicing</keyword>
<keyword id="KW-0238">DNA-binding</keyword>
<keyword id="KW-0945">Host-virus interaction</keyword>
<keyword id="KW-0539">Nucleus</keyword>
<keyword id="KW-1185">Reference proteome</keyword>
<keyword id="KW-0678">Repressor</keyword>
<keyword id="KW-0804">Transcription</keyword>
<keyword id="KW-0805">Transcription regulation</keyword>
<evidence type="ECO:0000255" key="1">
    <source>
        <dbReference type="PROSITE-ProRule" id="PRU00353"/>
    </source>
</evidence>
<evidence type="ECO:0000256" key="2">
    <source>
        <dbReference type="SAM" id="MobiDB-lite"/>
    </source>
</evidence>
<evidence type="ECO:0000269" key="3">
    <source>
    </source>
</evidence>
<evidence type="ECO:0000269" key="4">
    <source>
    </source>
</evidence>
<evidence type="ECO:0000269" key="5">
    <source>
    </source>
</evidence>
<evidence type="ECO:0000269" key="6">
    <source>
    </source>
</evidence>
<evidence type="ECO:0000269" key="7">
    <source>
    </source>
</evidence>
<evidence type="ECO:0000269" key="8">
    <source>
    </source>
</evidence>
<evidence type="ECO:0000269" key="9">
    <source>
    </source>
</evidence>
<evidence type="ECO:0000269" key="10">
    <source>
    </source>
</evidence>
<evidence type="ECO:0000269" key="11">
    <source>
    </source>
</evidence>
<evidence type="ECO:0000269" key="12">
    <source>
    </source>
</evidence>
<evidence type="ECO:0000303" key="13">
    <source>
    </source>
</evidence>
<evidence type="ECO:0000305" key="14"/>
<organism>
    <name type="scientific">Arabidopsis thaliana</name>
    <name type="common">Mouse-ear cress</name>
    <dbReference type="NCBI Taxonomy" id="3702"/>
    <lineage>
        <taxon>Eukaryota</taxon>
        <taxon>Viridiplantae</taxon>
        <taxon>Streptophyta</taxon>
        <taxon>Embryophyta</taxon>
        <taxon>Tracheophyta</taxon>
        <taxon>Spermatophyta</taxon>
        <taxon>Magnoliopsida</taxon>
        <taxon>eudicotyledons</taxon>
        <taxon>Gunneridae</taxon>
        <taxon>Pentapetalae</taxon>
        <taxon>rosids</taxon>
        <taxon>malvids</taxon>
        <taxon>Brassicales</taxon>
        <taxon>Brassicaceae</taxon>
        <taxon>Camelineae</taxon>
        <taxon>Arabidopsis</taxon>
    </lineage>
</organism>
<dbReference type="EMBL" id="X74756">
    <property type="protein sequence ID" value="CAA52772.1"/>
    <property type="status" value="ALT_SEQ"/>
    <property type="molecule type" value="mRNA"/>
</dbReference>
<dbReference type="EMBL" id="AL590346">
    <property type="protein sequence ID" value="CAC35884.1"/>
    <property type="molecule type" value="Genomic_DNA"/>
</dbReference>
<dbReference type="EMBL" id="CP002688">
    <property type="protein sequence ID" value="AED91350.1"/>
    <property type="molecule type" value="Genomic_DNA"/>
</dbReference>
<dbReference type="EMBL" id="AK118910">
    <property type="protein sequence ID" value="BAC43493.1"/>
    <property type="molecule type" value="mRNA"/>
</dbReference>
<dbReference type="EMBL" id="AY080862">
    <property type="protein sequence ID" value="AAL87335.1"/>
    <property type="molecule type" value="mRNA"/>
</dbReference>
<dbReference type="EMBL" id="AY133762">
    <property type="protein sequence ID" value="AAM91696.1"/>
    <property type="molecule type" value="mRNA"/>
</dbReference>
<dbReference type="EMBL" id="AK228803">
    <property type="protein sequence ID" value="BAF00699.1"/>
    <property type="molecule type" value="mRNA"/>
</dbReference>
<dbReference type="PIR" id="S37100">
    <property type="entry name" value="S37100"/>
</dbReference>
<dbReference type="RefSeq" id="NP_680161.1">
    <molecule id="Q9C598-1"/>
    <property type="nucleotide sequence ID" value="NM_147856.4"/>
</dbReference>
<dbReference type="SMR" id="Q9C598"/>
<dbReference type="BioGRID" id="16057">
    <property type="interactions" value="25"/>
</dbReference>
<dbReference type="FunCoup" id="Q9C598">
    <property type="interactions" value="49"/>
</dbReference>
<dbReference type="IntAct" id="Q9C598">
    <property type="interactions" value="20"/>
</dbReference>
<dbReference type="STRING" id="3702.Q9C598"/>
<dbReference type="PaxDb" id="3702-AT5G08790.1"/>
<dbReference type="ProteomicsDB" id="251269">
    <molecule id="Q9C598-1"/>
</dbReference>
<dbReference type="EnsemblPlants" id="AT5G08790.1">
    <molecule id="Q9C598-1"/>
    <property type="protein sequence ID" value="AT5G08790.1"/>
    <property type="gene ID" value="AT5G08790"/>
</dbReference>
<dbReference type="GeneID" id="830779"/>
<dbReference type="Gramene" id="AT5G08790.1">
    <molecule id="Q9C598-1"/>
    <property type="protein sequence ID" value="AT5G08790.1"/>
    <property type="gene ID" value="AT5G08790"/>
</dbReference>
<dbReference type="KEGG" id="ath:AT5G08790"/>
<dbReference type="Araport" id="AT5G08790"/>
<dbReference type="TAIR" id="AT5G08790">
    <property type="gene designation" value="ATAF2"/>
</dbReference>
<dbReference type="eggNOG" id="ENOG502QVRF">
    <property type="taxonomic scope" value="Eukaryota"/>
</dbReference>
<dbReference type="HOGENOM" id="CLU_035664_3_1_1"/>
<dbReference type="InParanoid" id="Q9C598"/>
<dbReference type="OMA" id="QSAPKWD"/>
<dbReference type="OrthoDB" id="1921961at2759"/>
<dbReference type="PhylomeDB" id="Q9C598"/>
<dbReference type="PRO" id="PR:Q9C598"/>
<dbReference type="Proteomes" id="UP000006548">
    <property type="component" value="Chromosome 5"/>
</dbReference>
<dbReference type="ExpressionAtlas" id="Q9C598">
    <property type="expression patterns" value="baseline and differential"/>
</dbReference>
<dbReference type="GO" id="GO:0005634">
    <property type="term" value="C:nucleus"/>
    <property type="evidence" value="ECO:0000314"/>
    <property type="project" value="TAIR"/>
</dbReference>
<dbReference type="GO" id="GO:0003700">
    <property type="term" value="F:DNA-binding transcription factor activity"/>
    <property type="evidence" value="ECO:0000314"/>
    <property type="project" value="TAIR"/>
</dbReference>
<dbReference type="GO" id="GO:0043424">
    <property type="term" value="F:protein histidine kinase binding"/>
    <property type="evidence" value="ECO:0000353"/>
    <property type="project" value="UniProtKB"/>
</dbReference>
<dbReference type="GO" id="GO:0043565">
    <property type="term" value="F:sequence-specific DNA binding"/>
    <property type="evidence" value="ECO:0000353"/>
    <property type="project" value="TAIR"/>
</dbReference>
<dbReference type="GO" id="GO:0009793">
    <property type="term" value="P:embryo development ending in seed dormancy"/>
    <property type="evidence" value="ECO:0000315"/>
    <property type="project" value="UniProtKB"/>
</dbReference>
<dbReference type="GO" id="GO:0010150">
    <property type="term" value="P:leaf senescence"/>
    <property type="evidence" value="ECO:0000315"/>
    <property type="project" value="UniProtKB"/>
</dbReference>
<dbReference type="GO" id="GO:0045892">
    <property type="term" value="P:negative regulation of DNA-templated transcription"/>
    <property type="evidence" value="ECO:0000314"/>
    <property type="project" value="UniProtKB"/>
</dbReference>
<dbReference type="GO" id="GO:0045893">
    <property type="term" value="P:positive regulation of DNA-templated transcription"/>
    <property type="evidence" value="ECO:0000314"/>
    <property type="project" value="UniProtKB"/>
</dbReference>
<dbReference type="GO" id="GO:0008361">
    <property type="term" value="P:regulation of cell size"/>
    <property type="evidence" value="ECO:0000315"/>
    <property type="project" value="TAIR"/>
</dbReference>
<dbReference type="GO" id="GO:0010099">
    <property type="term" value="P:regulation of photomorphogenesis"/>
    <property type="evidence" value="ECO:0000315"/>
    <property type="project" value="UniProtKB"/>
</dbReference>
<dbReference type="GO" id="GO:0009620">
    <property type="term" value="P:response to fungus"/>
    <property type="evidence" value="ECO:0000315"/>
    <property type="project" value="TAIR"/>
</dbReference>
<dbReference type="GO" id="GO:0009753">
    <property type="term" value="P:response to jasmonic acid"/>
    <property type="evidence" value="ECO:0000270"/>
    <property type="project" value="TAIR"/>
</dbReference>
<dbReference type="GO" id="GO:0009416">
    <property type="term" value="P:response to light stimulus"/>
    <property type="evidence" value="ECO:0000270"/>
    <property type="project" value="TAIR"/>
</dbReference>
<dbReference type="GO" id="GO:0009751">
    <property type="term" value="P:response to salicylic acid"/>
    <property type="evidence" value="ECO:0000270"/>
    <property type="project" value="TAIR"/>
</dbReference>
<dbReference type="GO" id="GO:0009744">
    <property type="term" value="P:response to sucrose"/>
    <property type="evidence" value="ECO:0000270"/>
    <property type="project" value="TAIR"/>
</dbReference>
<dbReference type="GO" id="GO:0009611">
    <property type="term" value="P:response to wounding"/>
    <property type="evidence" value="ECO:0000270"/>
    <property type="project" value="TAIR"/>
</dbReference>
<dbReference type="FunFam" id="2.170.150.80:FF:000004">
    <property type="entry name" value="NAC transcription factor"/>
    <property type="match status" value="1"/>
</dbReference>
<dbReference type="Gene3D" id="2.170.150.80">
    <property type="entry name" value="NAC domain"/>
    <property type="match status" value="1"/>
</dbReference>
<dbReference type="InterPro" id="IPR003441">
    <property type="entry name" value="NAC-dom"/>
</dbReference>
<dbReference type="InterPro" id="IPR036093">
    <property type="entry name" value="NAC_dom_sf"/>
</dbReference>
<dbReference type="PANTHER" id="PTHR31744:SF233">
    <property type="entry name" value="NAC DOMAIN-CONTAINING PROTEIN 72-LIKE"/>
    <property type="match status" value="1"/>
</dbReference>
<dbReference type="PANTHER" id="PTHR31744">
    <property type="entry name" value="PROTEIN CUP-SHAPED COTYLEDON 2-RELATED"/>
    <property type="match status" value="1"/>
</dbReference>
<dbReference type="Pfam" id="PF02365">
    <property type="entry name" value="NAM"/>
    <property type="match status" value="1"/>
</dbReference>
<dbReference type="SUPFAM" id="SSF101941">
    <property type="entry name" value="NAC domain"/>
    <property type="match status" value="1"/>
</dbReference>
<dbReference type="PROSITE" id="PS51005">
    <property type="entry name" value="NAC"/>
    <property type="match status" value="1"/>
</dbReference>
<reference key="1">
    <citation type="submission" date="1993-08" db="EMBL/GenBank/DDBJ databases">
        <authorList>
            <person name="Rueth J."/>
            <person name="Schweyen R."/>
            <person name="Hirt H."/>
        </authorList>
    </citation>
    <scope>NUCLEOTIDE SEQUENCE [MRNA] (ISOFORM 1)</scope>
</reference>
<reference key="2">
    <citation type="journal article" date="2000" name="Nature">
        <title>Sequence and analysis of chromosome 5 of the plant Arabidopsis thaliana.</title>
        <authorList>
            <person name="Tabata S."/>
            <person name="Kaneko T."/>
            <person name="Nakamura Y."/>
            <person name="Kotani H."/>
            <person name="Kato T."/>
            <person name="Asamizu E."/>
            <person name="Miyajima N."/>
            <person name="Sasamoto S."/>
            <person name="Kimura T."/>
            <person name="Hosouchi T."/>
            <person name="Kawashima K."/>
            <person name="Kohara M."/>
            <person name="Matsumoto M."/>
            <person name="Matsuno A."/>
            <person name="Muraki A."/>
            <person name="Nakayama S."/>
            <person name="Nakazaki N."/>
            <person name="Naruo K."/>
            <person name="Okumura S."/>
            <person name="Shinpo S."/>
            <person name="Takeuchi C."/>
            <person name="Wada T."/>
            <person name="Watanabe A."/>
            <person name="Yamada M."/>
            <person name="Yasuda M."/>
            <person name="Sato S."/>
            <person name="de la Bastide M."/>
            <person name="Huang E."/>
            <person name="Spiegel L."/>
            <person name="Gnoj L."/>
            <person name="O'Shaughnessy A."/>
            <person name="Preston R."/>
            <person name="Habermann K."/>
            <person name="Murray J."/>
            <person name="Johnson D."/>
            <person name="Rohlfing T."/>
            <person name="Nelson J."/>
            <person name="Stoneking T."/>
            <person name="Pepin K."/>
            <person name="Spieth J."/>
            <person name="Sekhon M."/>
            <person name="Armstrong J."/>
            <person name="Becker M."/>
            <person name="Belter E."/>
            <person name="Cordum H."/>
            <person name="Cordes M."/>
            <person name="Courtney L."/>
            <person name="Courtney W."/>
            <person name="Dante M."/>
            <person name="Du H."/>
            <person name="Edwards J."/>
            <person name="Fryman J."/>
            <person name="Haakensen B."/>
            <person name="Lamar E."/>
            <person name="Latreille P."/>
            <person name="Leonard S."/>
            <person name="Meyer R."/>
            <person name="Mulvaney E."/>
            <person name="Ozersky P."/>
            <person name="Riley A."/>
            <person name="Strowmatt C."/>
            <person name="Wagner-McPherson C."/>
            <person name="Wollam A."/>
            <person name="Yoakum M."/>
            <person name="Bell M."/>
            <person name="Dedhia N."/>
            <person name="Parnell L."/>
            <person name="Shah R."/>
            <person name="Rodriguez M."/>
            <person name="Hoon See L."/>
            <person name="Vil D."/>
            <person name="Baker J."/>
            <person name="Kirchoff K."/>
            <person name="Toth K."/>
            <person name="King L."/>
            <person name="Bahret A."/>
            <person name="Miller B."/>
            <person name="Marra M.A."/>
            <person name="Martienssen R."/>
            <person name="McCombie W.R."/>
            <person name="Wilson R.K."/>
            <person name="Murphy G."/>
            <person name="Bancroft I."/>
            <person name="Volckaert G."/>
            <person name="Wambutt R."/>
            <person name="Duesterhoeft A."/>
            <person name="Stiekema W."/>
            <person name="Pohl T."/>
            <person name="Entian K.-D."/>
            <person name="Terryn N."/>
            <person name="Hartley N."/>
            <person name="Bent E."/>
            <person name="Johnson S."/>
            <person name="Langham S.-A."/>
            <person name="McCullagh B."/>
            <person name="Robben J."/>
            <person name="Grymonprez B."/>
            <person name="Zimmermann W."/>
            <person name="Ramsperger U."/>
            <person name="Wedler H."/>
            <person name="Balke K."/>
            <person name="Wedler E."/>
            <person name="Peters S."/>
            <person name="van Staveren M."/>
            <person name="Dirkse W."/>
            <person name="Mooijman P."/>
            <person name="Klein Lankhorst R."/>
            <person name="Weitzenegger T."/>
            <person name="Bothe G."/>
            <person name="Rose M."/>
            <person name="Hauf J."/>
            <person name="Berneiser S."/>
            <person name="Hempel S."/>
            <person name="Feldpausch M."/>
            <person name="Lamberth S."/>
            <person name="Villarroel R."/>
            <person name="Gielen J."/>
            <person name="Ardiles W."/>
            <person name="Bents O."/>
            <person name="Lemcke K."/>
            <person name="Kolesov G."/>
            <person name="Mayer K.F.X."/>
            <person name="Rudd S."/>
            <person name="Schoof H."/>
            <person name="Schueller C."/>
            <person name="Zaccaria P."/>
            <person name="Mewes H.-W."/>
            <person name="Bevan M."/>
            <person name="Fransz P.F."/>
        </authorList>
    </citation>
    <scope>NUCLEOTIDE SEQUENCE [LARGE SCALE GENOMIC DNA]</scope>
    <source>
        <strain>cv. Columbia</strain>
    </source>
</reference>
<reference key="3">
    <citation type="journal article" date="2017" name="Plant J.">
        <title>Araport11: a complete reannotation of the Arabidopsis thaliana reference genome.</title>
        <authorList>
            <person name="Cheng C.Y."/>
            <person name="Krishnakumar V."/>
            <person name="Chan A.P."/>
            <person name="Thibaud-Nissen F."/>
            <person name="Schobel S."/>
            <person name="Town C.D."/>
        </authorList>
    </citation>
    <scope>GENOME REANNOTATION</scope>
    <source>
        <strain>cv. Columbia</strain>
    </source>
</reference>
<reference key="4">
    <citation type="journal article" date="2002" name="Science">
        <title>Functional annotation of a full-length Arabidopsis cDNA collection.</title>
        <authorList>
            <person name="Seki M."/>
            <person name="Narusaka M."/>
            <person name="Kamiya A."/>
            <person name="Ishida J."/>
            <person name="Satou M."/>
            <person name="Sakurai T."/>
            <person name="Nakajima M."/>
            <person name="Enju A."/>
            <person name="Akiyama K."/>
            <person name="Oono Y."/>
            <person name="Muramatsu M."/>
            <person name="Hayashizaki Y."/>
            <person name="Kawai J."/>
            <person name="Carninci P."/>
            <person name="Itoh M."/>
            <person name="Ishii Y."/>
            <person name="Arakawa T."/>
            <person name="Shibata K."/>
            <person name="Shinagawa A."/>
            <person name="Shinozaki K."/>
        </authorList>
    </citation>
    <scope>NUCLEOTIDE SEQUENCE [LARGE SCALE MRNA] (ISOFORM 2)</scope>
    <source>
        <strain>cv. Columbia</strain>
    </source>
</reference>
<reference key="5">
    <citation type="journal article" date="2003" name="Science">
        <title>Empirical analysis of transcriptional activity in the Arabidopsis genome.</title>
        <authorList>
            <person name="Yamada K."/>
            <person name="Lim J."/>
            <person name="Dale J.M."/>
            <person name="Chen H."/>
            <person name="Shinn P."/>
            <person name="Palm C.J."/>
            <person name="Southwick A.M."/>
            <person name="Wu H.C."/>
            <person name="Kim C.J."/>
            <person name="Nguyen M."/>
            <person name="Pham P.K."/>
            <person name="Cheuk R.F."/>
            <person name="Karlin-Newmann G."/>
            <person name="Liu S.X."/>
            <person name="Lam B."/>
            <person name="Sakano H."/>
            <person name="Wu T."/>
            <person name="Yu G."/>
            <person name="Miranda M."/>
            <person name="Quach H.L."/>
            <person name="Tripp M."/>
            <person name="Chang C.H."/>
            <person name="Lee J.M."/>
            <person name="Toriumi M.J."/>
            <person name="Chan M.M."/>
            <person name="Tang C.C."/>
            <person name="Onodera C.S."/>
            <person name="Deng J.M."/>
            <person name="Akiyama K."/>
            <person name="Ansari Y."/>
            <person name="Arakawa T."/>
            <person name="Banh J."/>
            <person name="Banno F."/>
            <person name="Bowser L."/>
            <person name="Brooks S.Y."/>
            <person name="Carninci P."/>
            <person name="Chao Q."/>
            <person name="Choy N."/>
            <person name="Enju A."/>
            <person name="Goldsmith A.D."/>
            <person name="Gurjal M."/>
            <person name="Hansen N.F."/>
            <person name="Hayashizaki Y."/>
            <person name="Johnson-Hopson C."/>
            <person name="Hsuan V.W."/>
            <person name="Iida K."/>
            <person name="Karnes M."/>
            <person name="Khan S."/>
            <person name="Koesema E."/>
            <person name="Ishida J."/>
            <person name="Jiang P.X."/>
            <person name="Jones T."/>
            <person name="Kawai J."/>
            <person name="Kamiya A."/>
            <person name="Meyers C."/>
            <person name="Nakajima M."/>
            <person name="Narusaka M."/>
            <person name="Seki M."/>
            <person name="Sakurai T."/>
            <person name="Satou M."/>
            <person name="Tamse R."/>
            <person name="Vaysberg M."/>
            <person name="Wallender E.K."/>
            <person name="Wong C."/>
            <person name="Yamamura Y."/>
            <person name="Yuan S."/>
            <person name="Shinozaki K."/>
            <person name="Davis R.W."/>
            <person name="Theologis A."/>
            <person name="Ecker J.R."/>
        </authorList>
    </citation>
    <scope>NUCLEOTIDE SEQUENCE [LARGE SCALE MRNA] (ISOFORM 1)</scope>
    <source>
        <strain>cv. Columbia</strain>
    </source>
</reference>
<reference key="6">
    <citation type="submission" date="2006-07" db="EMBL/GenBank/DDBJ databases">
        <title>Large-scale analysis of RIKEN Arabidopsis full-length (RAFL) cDNAs.</title>
        <authorList>
            <person name="Totoki Y."/>
            <person name="Seki M."/>
            <person name="Ishida J."/>
            <person name="Nakajima M."/>
            <person name="Enju A."/>
            <person name="Kamiya A."/>
            <person name="Narusaka M."/>
            <person name="Shin-i T."/>
            <person name="Nakagawa M."/>
            <person name="Sakamoto N."/>
            <person name="Oishi K."/>
            <person name="Kohara Y."/>
            <person name="Kobayashi M."/>
            <person name="Toyoda A."/>
            <person name="Sakaki Y."/>
            <person name="Sakurai T."/>
            <person name="Iida K."/>
            <person name="Akiyama K."/>
            <person name="Satou M."/>
            <person name="Toyoda T."/>
            <person name="Konagaya A."/>
            <person name="Carninci P."/>
            <person name="Kawai J."/>
            <person name="Hayashizaki Y."/>
            <person name="Shinozaki K."/>
        </authorList>
    </citation>
    <scope>NUCLEOTIDE SEQUENCE [LARGE SCALE MRNA] (ISOFORM 1)</scope>
    <source>
        <strain>cv. Columbia</strain>
    </source>
</reference>
<reference key="7">
    <citation type="journal article" date="2003" name="DNA Res.">
        <title>Comprehensive analysis of NAC family genes in Oryza sativa and Arabidopsis thaliana.</title>
        <authorList>
            <person name="Ooka H."/>
            <person name="Satoh K."/>
            <person name="Doi K."/>
            <person name="Nagata T."/>
            <person name="Otomo Y."/>
            <person name="Murakami K."/>
            <person name="Matsubara K."/>
            <person name="Osato N."/>
            <person name="Kawai J."/>
            <person name="Carninci P."/>
            <person name="Hayashizaki Y."/>
            <person name="Suzuki K."/>
            <person name="Kojima K."/>
            <person name="Takahara Y."/>
            <person name="Yamamoto K."/>
            <person name="Kikuchi S."/>
        </authorList>
    </citation>
    <scope>GENE FAMILY</scope>
    <scope>NOMENCLATURE</scope>
</reference>
<reference key="8">
    <citation type="journal article" date="2005" name="Plant J.">
        <title>The transcription factor ATAF2 represses the expression of pathogenesis-related genes in Arabidopsis.</title>
        <authorList>
            <person name="Delessert C."/>
            <person name="Kazan K."/>
            <person name="Wilson I.W."/>
            <person name="Van Der Straeten D."/>
            <person name="Manners J."/>
            <person name="Dennis E.S."/>
            <person name="Dolferus R."/>
        </authorList>
    </citation>
    <scope>FUNCTION</scope>
    <scope>TISSUE SPECIFICITY</scope>
    <scope>INDUCTION</scope>
</reference>
<reference key="9">
    <citation type="journal article" date="2007" name="Mol. Plant Microbe Interact.">
        <title>Identification of 118 Arabidopsis transcription factor and 30 ubiquitin-ligase genes responding to chitin, a plant-defense elicitor.</title>
        <authorList>
            <person name="Libault M."/>
            <person name="Wan J."/>
            <person name="Czechowski T."/>
            <person name="Udvardi M."/>
            <person name="Stacey G."/>
        </authorList>
    </citation>
    <scope>INDUCTION BY CHITIN ELICITOR</scope>
</reference>
<reference key="10">
    <citation type="journal article" date="2008" name="J. Proteome Res.">
        <title>Toward an interaction map of the two-component signaling pathway of Arabidopsis thaliana.</title>
        <authorList>
            <person name="Dortay H."/>
            <person name="Gruhn N."/>
            <person name="Pfeifer A."/>
            <person name="Schwerdtner M."/>
            <person name="Schmuelling T."/>
            <person name="Heyl A."/>
        </authorList>
    </citation>
    <scope>INTERACTION WITH AHK2</scope>
</reference>
<reference key="11">
    <citation type="journal article" date="2008" name="Plant Cell">
        <title>NAC family proteins NARS1/NAC2 and NARS2/NAM in the outer integument regulate embryogenesis in Arabidopsis.</title>
        <authorList>
            <person name="Kunieda T."/>
            <person name="Mitsuda N."/>
            <person name="Ohme-Takagi M."/>
            <person name="Takeda S."/>
            <person name="Aida M."/>
            <person name="Tasaka M."/>
            <person name="Kondo M."/>
            <person name="Nishimura M."/>
            <person name="Hara-Nishimura I."/>
        </authorList>
    </citation>
    <scope>FUNCTION</scope>
</reference>
<reference key="12">
    <citation type="journal article" date="2009" name="J. Virol.">
        <title>Interaction of the tobacco mosaic virus replicase protein with a NAC domain transcription factor is associated with the suppression of systemic host defenses.</title>
        <authorList>
            <person name="Wang X."/>
            <person name="Goregaoker S.P."/>
            <person name="Culver J.N."/>
        </authorList>
    </citation>
    <scope>FUNCTION</scope>
    <scope>INTERACTION WITH TOBAMOVIRUS REPLICASE</scope>
    <scope>SUBCELLULAR LOCATION</scope>
    <scope>INDUCTION</scope>
</reference>
<reference key="13">
    <citation type="journal article" date="2012" name="BMC Plant Biol.">
        <title>DNA binding specificity of ATAF2, a NAC domain transcription factor targeted for degradation by tobacco mosaic virus.</title>
        <authorList>
            <person name="Wang X."/>
            <person name="Culver J.N."/>
        </authorList>
    </citation>
    <scope>FUNCTION</scope>
    <scope>SUBUNIT</scope>
</reference>
<reference key="14">
    <citation type="journal article" date="2012" name="Mol. Cells">
        <title>ATAF2, a NAC transcription factor, binds to the promoter and regulates NIT2 gene expression involved in auxin biosynthesis.</title>
        <authorList>
            <person name="Huh S.U."/>
            <person name="Lee S.B."/>
            <person name="Kim H.H."/>
            <person name="Paek K.H."/>
        </authorList>
    </citation>
    <scope>FUNCTION</scope>
    <scope>INDUCTION</scope>
    <scope>DISRUPTION PHENOTYPE</scope>
</reference>
<reference key="15">
    <citation type="journal article" date="2013" name="Proc. Natl. Acad. Sci. U.S.A.">
        <title>Arabidopsis thaliana AHL family modulates hypocotyl growth redundantly by interacting with each other via the PPC/DUF296 domain.</title>
        <authorList>
            <person name="Zhao J."/>
            <person name="Favero D.S."/>
            <person name="Peng H."/>
            <person name="Neff M.M."/>
        </authorList>
    </citation>
    <scope>INTERACTION WITH AHL12 AND AHL27</scope>
</reference>
<reference key="16">
    <citation type="journal article" date="2015" name="Development">
        <title>ATAF2 integrates Arabidopsis brassinosteroid inactivation and seedling photomorphogenesis.</title>
        <authorList>
            <person name="Peng H."/>
            <person name="Zhao J."/>
            <person name="Neff M.M."/>
        </authorList>
    </citation>
    <scope>FUNCTION</scope>
    <scope>INDUCTION</scope>
</reference>
<reference key="17">
    <citation type="journal article" date="2015" name="Plant J.">
        <title>SNAC-As, stress-responsive NAC transcription factors, mediate ABA-inducible leaf senescence.</title>
        <authorList>
            <person name="Takasaki H."/>
            <person name="Maruyama K."/>
            <person name="Takahashi F."/>
            <person name="Fujita M."/>
            <person name="Yoshida T."/>
            <person name="Nakashima K."/>
            <person name="Myouga F."/>
            <person name="Toyooka K."/>
            <person name="Yamaguchi-Shinozaki K."/>
            <person name="Shinozaki K."/>
        </authorList>
    </citation>
    <scope>FUNCTION</scope>
</reference>
<gene>
    <name type="primary">NAC081</name>
    <name type="synonym">ATAF2</name>
    <name type="ordered locus">At5g08790</name>
    <name type="ORF">T2K12.140</name>
</gene>
<accession>Q9C598</accession>
<accession>Q38968</accession>
<accession>Q8GWD8</accession>
<protein>
    <recommendedName>
        <fullName>Protein ATAF2</fullName>
    </recommendedName>
    <alternativeName>
        <fullName>NAC domain-containing protein 81</fullName>
        <shortName>ANAC081</shortName>
    </alternativeName>
</protein>
<sequence>MKSELNLPAGFRFHPTDEELVKFYLCRKCASEQISAPVIAEIDLYKFNPWELPEMSLYGEKEWYFFSPRDRKYPNGSRPNRAAGTGYWKATGADKPIGKPKTLGIKKALVFYAGKAPKGIKTNWIMHEYRLANVDRSASVNKKNNLRLDDWVLCRIYNKKGTMEKYFPADEKPRTTTMAEQSSSPFDTSDSTYPTLQEDDSSSSGGHGHVVSPDVLEVQSEPKWGELEDALEAFDTSMFGSSMELLQPDAFVPQFLYQSDYFTSFQDPPEQKPFLNWSFAPQG</sequence>
<comment type="function">
    <text evidence="3 6 7 8 9 11 12">Involved in disease resistance response (PubMed:16115070, PubMed:19625399). May function as repressor of pathogenesis-related proteins (PubMed:16115070). May function in the regulation of host basal defense responses against viral infection (PubMed:19625399). Transcriptional activator involved in responses to wounding and infection with tobamovirus (TMV) (PubMed:22937923). Binds to the DNA sequences 5'-AAAATATCT-3' and 5'AGATTTTT-3' of CYP734A1/BAS1 and CYP72C1/SOB7 promoters, respectively. Acts as a suppressor of the brassinosteroid (BR)-inactivating enzymes CYP734A1/BAS1 and CYP72C1/SOB7, and prevents their expression in almost all tissues. Plays a central role in integrating BR homeostasis and seedling development. Regulates the spatial regulation of BR homeostasis and participates in the regulation of hypocotyl elongation and root growth by suppressing BR catabolism. Mediates connection between BR catabolism and photomorphogenesis (PubMed:26493403). Binds to, and transactivates the promoter of the auxin biosynthetic gene NIT2 (PubMed:22965747). Stress-responsive NAC transcription factor involved in ABA-inducible leaf senescence signaling (PubMed:26518251). Required for normal seed development and morphology (PubMed:18849494).</text>
</comment>
<comment type="subunit">
    <text evidence="5 7 8 10">Homodimer (PubMed:22937923). Interacts with AHK2 (PubMed:18642946). Interacts with AHL12 and AHL27 (PubMed:24218605). Interacts with the helicase domain of the tobamovirus (TMV) replicase (PubMed:19625399).</text>
</comment>
<comment type="interaction">
    <interactant intactId="EBI-1998565">
        <id>Q9C598</id>
    </interactant>
    <interactant intactId="EBI-15192111">
        <id>Q8S3D1</id>
        <label>BHLH68</label>
    </interactant>
    <organismsDiffer>false</organismsDiffer>
    <experiments>3</experiments>
</comment>
<comment type="subcellular location">
    <subcellularLocation>
        <location evidence="1 7">Nucleus</location>
    </subcellularLocation>
</comment>
<comment type="alternative products">
    <event type="alternative splicing"/>
    <isoform>
        <id>Q9C598-1</id>
        <name>1</name>
        <sequence type="displayed"/>
    </isoform>
    <isoform>
        <id>Q9C598-2</id>
        <name>2</name>
        <sequence type="described" ref="VSP_039771 VSP_039772"/>
    </isoform>
</comment>
<comment type="tissue specificity">
    <text evidence="3">Expressed in roots, cotyledons, rosette leaves, cauline leaves and mature flowers. Expressed at low levels in stems and flower buds.</text>
</comment>
<comment type="induction">
    <text evidence="3 4 7 9 11">Induced by wounding, salicylic acid (SA), methyl jasmonate, drought stress, dark and sucrose starvation (PubMed:16115070). Induced by chitin elicitor (chitooctaose) (PubMed:17722694). Induced by salicylic acid and infection with tobamovirus (TMV) (PubMed:19625399). By indole-3-acetonitrile, salicylic acid (SA), sodium nitroprusside (SNP), salt stress and drought stress (PubMed:22965747). Down-regulated by brassinosteroid (BR) and transition from dark to white light (PubMed:26493403).</text>
</comment>
<comment type="domain">
    <text evidence="1">The NAC domain includes a DNA-binding domain and a dimerization domain.</text>
</comment>
<comment type="disruption phenotype">
    <text evidence="9">Reduced sensitivity to indole-3-acetonitrile.</text>
</comment>
<comment type="miscellaneous">
    <text evidence="3 6 9">Plants over-expressing NAC081 show enhanced susceptibility to the necrotrophic fungal pathogen Fusarium oxysporum (PubMed:16115070). Plants over-expressing NAC081 exhibit abnormal developmental phenotypes such as dwarfism and leaf-yellowing (PubMed:22965747). Plants silencing NAC081 produce abnormally shaped seeds (PubMed:18849494).</text>
</comment>
<comment type="sequence caution" evidence="14">
    <conflict type="erroneous initiation">
        <sequence resource="EMBL-CDS" id="CAA52772"/>
    </conflict>
    <text>Truncated N-terminus.</text>
</comment>
<comment type="sequence caution" evidence="14">
    <conflict type="frameshift">
        <sequence resource="EMBL-CDS" id="CAA52772"/>
    </conflict>
</comment>
<feature type="chain" id="PRO_0000398601" description="Protein ATAF2">
    <location>
        <begin position="1"/>
        <end position="283"/>
    </location>
</feature>
<feature type="domain" description="NAC" evidence="1">
    <location>
        <begin position="7"/>
        <end position="159"/>
    </location>
</feature>
<feature type="DNA-binding region" evidence="1">
    <location>
        <begin position="103"/>
        <end position="165"/>
    </location>
</feature>
<feature type="region of interest" description="Disordered" evidence="2">
    <location>
        <begin position="171"/>
        <end position="211"/>
    </location>
</feature>
<feature type="compositionally biased region" description="Polar residues" evidence="2">
    <location>
        <begin position="175"/>
        <end position="195"/>
    </location>
</feature>
<feature type="splice variant" id="VSP_039771" description="In isoform 2." evidence="13">
    <original>LDDWVL</original>
    <variation>VSSVSY</variation>
    <location>
        <begin position="148"/>
        <end position="153"/>
    </location>
</feature>
<feature type="splice variant" id="VSP_039772" description="In isoform 2." evidence="13">
    <location>
        <begin position="154"/>
        <end position="283"/>
    </location>
</feature>